<gene>
    <name evidence="1" type="primary">pgk</name>
    <name type="ordered locus">Acid_4421</name>
</gene>
<feature type="chain" id="PRO_1000058072" description="Phosphoglycerate kinase">
    <location>
        <begin position="1"/>
        <end position="391"/>
    </location>
</feature>
<feature type="binding site" evidence="1">
    <location>
        <begin position="21"/>
        <end position="23"/>
    </location>
    <ligand>
        <name>substrate</name>
    </ligand>
</feature>
<feature type="binding site" evidence="1">
    <location>
        <position position="41"/>
    </location>
    <ligand>
        <name>substrate</name>
    </ligand>
</feature>
<feature type="binding site" evidence="1">
    <location>
        <begin position="64"/>
        <end position="67"/>
    </location>
    <ligand>
        <name>substrate</name>
    </ligand>
</feature>
<feature type="binding site" evidence="1">
    <location>
        <position position="121"/>
    </location>
    <ligand>
        <name>substrate</name>
    </ligand>
</feature>
<feature type="binding site" evidence="1">
    <location>
        <position position="154"/>
    </location>
    <ligand>
        <name>substrate</name>
    </ligand>
</feature>
<feature type="binding site" evidence="1">
    <location>
        <position position="205"/>
    </location>
    <ligand>
        <name>ATP</name>
        <dbReference type="ChEBI" id="CHEBI:30616"/>
    </ligand>
</feature>
<feature type="binding site" evidence="1">
    <location>
        <position position="322"/>
    </location>
    <ligand>
        <name>ATP</name>
        <dbReference type="ChEBI" id="CHEBI:30616"/>
    </ligand>
</feature>
<feature type="binding site" evidence="1">
    <location>
        <begin position="348"/>
        <end position="351"/>
    </location>
    <ligand>
        <name>ATP</name>
        <dbReference type="ChEBI" id="CHEBI:30616"/>
    </ligand>
</feature>
<organism>
    <name type="scientific">Solibacter usitatus (strain Ellin6076)</name>
    <dbReference type="NCBI Taxonomy" id="234267"/>
    <lineage>
        <taxon>Bacteria</taxon>
        <taxon>Pseudomonadati</taxon>
        <taxon>Acidobacteriota</taxon>
        <taxon>Terriglobia</taxon>
        <taxon>Bryobacterales</taxon>
        <taxon>Solibacteraceae</taxon>
        <taxon>Candidatus Solibacter</taxon>
    </lineage>
</organism>
<comment type="catalytic activity">
    <reaction evidence="1">
        <text>(2R)-3-phosphoglycerate + ATP = (2R)-3-phospho-glyceroyl phosphate + ADP</text>
        <dbReference type="Rhea" id="RHEA:14801"/>
        <dbReference type="ChEBI" id="CHEBI:30616"/>
        <dbReference type="ChEBI" id="CHEBI:57604"/>
        <dbReference type="ChEBI" id="CHEBI:58272"/>
        <dbReference type="ChEBI" id="CHEBI:456216"/>
        <dbReference type="EC" id="2.7.2.3"/>
    </reaction>
</comment>
<comment type="pathway">
    <text evidence="1">Carbohydrate degradation; glycolysis; pyruvate from D-glyceraldehyde 3-phosphate: step 2/5.</text>
</comment>
<comment type="subunit">
    <text evidence="1">Monomer.</text>
</comment>
<comment type="subcellular location">
    <subcellularLocation>
        <location evidence="1">Cytoplasm</location>
    </subcellularLocation>
</comment>
<comment type="similarity">
    <text evidence="1">Belongs to the phosphoglycerate kinase family.</text>
</comment>
<reference key="1">
    <citation type="journal article" date="2009" name="Appl. Environ. Microbiol.">
        <title>Three genomes from the phylum Acidobacteria provide insight into the lifestyles of these microorganisms in soils.</title>
        <authorList>
            <person name="Ward N.L."/>
            <person name="Challacombe J.F."/>
            <person name="Janssen P.H."/>
            <person name="Henrissat B."/>
            <person name="Coutinho P.M."/>
            <person name="Wu M."/>
            <person name="Xie G."/>
            <person name="Haft D.H."/>
            <person name="Sait M."/>
            <person name="Badger J."/>
            <person name="Barabote R.D."/>
            <person name="Bradley B."/>
            <person name="Brettin T.S."/>
            <person name="Brinkac L.M."/>
            <person name="Bruce D."/>
            <person name="Creasy T."/>
            <person name="Daugherty S.C."/>
            <person name="Davidsen T.M."/>
            <person name="DeBoy R.T."/>
            <person name="Detter J.C."/>
            <person name="Dodson R.J."/>
            <person name="Durkin A.S."/>
            <person name="Ganapathy A."/>
            <person name="Gwinn-Giglio M."/>
            <person name="Han C.S."/>
            <person name="Khouri H."/>
            <person name="Kiss H."/>
            <person name="Kothari S.P."/>
            <person name="Madupu R."/>
            <person name="Nelson K.E."/>
            <person name="Nelson W.C."/>
            <person name="Paulsen I."/>
            <person name="Penn K."/>
            <person name="Ren Q."/>
            <person name="Rosovitz M.J."/>
            <person name="Selengut J.D."/>
            <person name="Shrivastava S."/>
            <person name="Sullivan S.A."/>
            <person name="Tapia R."/>
            <person name="Thompson L.S."/>
            <person name="Watkins K.L."/>
            <person name="Yang Q."/>
            <person name="Yu C."/>
            <person name="Zafar N."/>
            <person name="Zhou L."/>
            <person name="Kuske C.R."/>
        </authorList>
    </citation>
    <scope>NUCLEOTIDE SEQUENCE [LARGE SCALE GENOMIC DNA]</scope>
    <source>
        <strain>Ellin6076</strain>
    </source>
</reference>
<dbReference type="EC" id="2.7.2.3" evidence="1"/>
<dbReference type="EMBL" id="CP000473">
    <property type="protein sequence ID" value="ABJ85382.1"/>
    <property type="molecule type" value="Genomic_DNA"/>
</dbReference>
<dbReference type="SMR" id="Q01Y83"/>
<dbReference type="FunCoup" id="Q01Y83">
    <property type="interactions" value="569"/>
</dbReference>
<dbReference type="STRING" id="234267.Acid_4421"/>
<dbReference type="KEGG" id="sus:Acid_4421"/>
<dbReference type="eggNOG" id="COG0126">
    <property type="taxonomic scope" value="Bacteria"/>
</dbReference>
<dbReference type="HOGENOM" id="CLU_025427_0_2_0"/>
<dbReference type="InParanoid" id="Q01Y83"/>
<dbReference type="OrthoDB" id="9808460at2"/>
<dbReference type="UniPathway" id="UPA00109">
    <property type="reaction ID" value="UER00185"/>
</dbReference>
<dbReference type="GO" id="GO:0005829">
    <property type="term" value="C:cytosol"/>
    <property type="evidence" value="ECO:0007669"/>
    <property type="project" value="TreeGrafter"/>
</dbReference>
<dbReference type="GO" id="GO:0043531">
    <property type="term" value="F:ADP binding"/>
    <property type="evidence" value="ECO:0007669"/>
    <property type="project" value="TreeGrafter"/>
</dbReference>
<dbReference type="GO" id="GO:0005524">
    <property type="term" value="F:ATP binding"/>
    <property type="evidence" value="ECO:0007669"/>
    <property type="project" value="UniProtKB-KW"/>
</dbReference>
<dbReference type="GO" id="GO:0004618">
    <property type="term" value="F:phosphoglycerate kinase activity"/>
    <property type="evidence" value="ECO:0007669"/>
    <property type="project" value="UniProtKB-UniRule"/>
</dbReference>
<dbReference type="GO" id="GO:0006094">
    <property type="term" value="P:gluconeogenesis"/>
    <property type="evidence" value="ECO:0007669"/>
    <property type="project" value="TreeGrafter"/>
</dbReference>
<dbReference type="GO" id="GO:0006096">
    <property type="term" value="P:glycolytic process"/>
    <property type="evidence" value="ECO:0007669"/>
    <property type="project" value="UniProtKB-UniRule"/>
</dbReference>
<dbReference type="CDD" id="cd00318">
    <property type="entry name" value="Phosphoglycerate_kinase"/>
    <property type="match status" value="1"/>
</dbReference>
<dbReference type="FunFam" id="3.40.50.1260:FF:000001">
    <property type="entry name" value="Phosphoglycerate kinase"/>
    <property type="match status" value="1"/>
</dbReference>
<dbReference type="FunFam" id="3.40.50.1260:FF:000002">
    <property type="entry name" value="Phosphoglycerate kinase"/>
    <property type="match status" value="1"/>
</dbReference>
<dbReference type="Gene3D" id="3.40.50.1260">
    <property type="entry name" value="Phosphoglycerate kinase, N-terminal domain"/>
    <property type="match status" value="2"/>
</dbReference>
<dbReference type="HAMAP" id="MF_00145">
    <property type="entry name" value="Phosphoglyc_kinase"/>
    <property type="match status" value="1"/>
</dbReference>
<dbReference type="InterPro" id="IPR001576">
    <property type="entry name" value="Phosphoglycerate_kinase"/>
</dbReference>
<dbReference type="InterPro" id="IPR015911">
    <property type="entry name" value="Phosphoglycerate_kinase_CS"/>
</dbReference>
<dbReference type="InterPro" id="IPR015824">
    <property type="entry name" value="Phosphoglycerate_kinase_N"/>
</dbReference>
<dbReference type="InterPro" id="IPR036043">
    <property type="entry name" value="Phosphoglycerate_kinase_sf"/>
</dbReference>
<dbReference type="PANTHER" id="PTHR11406">
    <property type="entry name" value="PHOSPHOGLYCERATE KINASE"/>
    <property type="match status" value="1"/>
</dbReference>
<dbReference type="PANTHER" id="PTHR11406:SF23">
    <property type="entry name" value="PHOSPHOGLYCERATE KINASE 1, CHLOROPLASTIC-RELATED"/>
    <property type="match status" value="1"/>
</dbReference>
<dbReference type="Pfam" id="PF00162">
    <property type="entry name" value="PGK"/>
    <property type="match status" value="1"/>
</dbReference>
<dbReference type="PIRSF" id="PIRSF000724">
    <property type="entry name" value="Pgk"/>
    <property type="match status" value="1"/>
</dbReference>
<dbReference type="PRINTS" id="PR00477">
    <property type="entry name" value="PHGLYCKINASE"/>
</dbReference>
<dbReference type="SUPFAM" id="SSF53748">
    <property type="entry name" value="Phosphoglycerate kinase"/>
    <property type="match status" value="1"/>
</dbReference>
<dbReference type="PROSITE" id="PS00111">
    <property type="entry name" value="PGLYCERATE_KINASE"/>
    <property type="match status" value="1"/>
</dbReference>
<evidence type="ECO:0000255" key="1">
    <source>
        <dbReference type="HAMAP-Rule" id="MF_00145"/>
    </source>
</evidence>
<sequence length="391" mass="41050">MSYLSIRDLDLKGKRVFIRVDFNVPLQKNDQGAMEITSDKRIKASLPTIQYALEHGAAVILASHLGRPKGKPNTEMSLKPVAARLEQVLKVPVKMAPDCVGPEVQAMLPAPGEVLLLENLRFHAEEEKNDPAFAAQLAALCEIYVNDAFGSAHRAHASTEGMVKLVKQAAAGLLMEKELKYLGMATTNPPRPCVAILGGAKVSDKIEVIQNLGKVVDRLLIGGAMAYTFLKAQGLPTGKSLVEDDKVELAKSLLAELGERLMLPVDHVVVSEIAAGAPFEVVDTIPEGKIAVDIGPKTVEAFSKVVAGAKTVIWNGPMGIFEKPPFDQGTVAVAKAVAGSGATSIVGGGDSEKAIKAAGVSDKISHVSTGGGASLEFLAGDTLPGVAALDR</sequence>
<protein>
    <recommendedName>
        <fullName evidence="1">Phosphoglycerate kinase</fullName>
        <ecNumber evidence="1">2.7.2.3</ecNumber>
    </recommendedName>
</protein>
<keyword id="KW-0067">ATP-binding</keyword>
<keyword id="KW-0963">Cytoplasm</keyword>
<keyword id="KW-0324">Glycolysis</keyword>
<keyword id="KW-0418">Kinase</keyword>
<keyword id="KW-0547">Nucleotide-binding</keyword>
<keyword id="KW-0808">Transferase</keyword>
<proteinExistence type="inferred from homology"/>
<accession>Q01Y83</accession>
<name>PGK_SOLUE</name>